<feature type="chain" id="PRO_0000194258" description="Mannose-1-phosphate guanylyltransferase">
    <location>
        <begin position="1"/>
        <end position="464"/>
    </location>
</feature>
<protein>
    <recommendedName>
        <fullName>Mannose-1-phosphate guanylyltransferase</fullName>
        <ecNumber>2.7.7.13</ecNumber>
    </recommendedName>
    <alternativeName>
        <fullName>GDP-mannose pyrophosphorylase</fullName>
        <shortName>GMP</shortName>
        <shortName>GMPP</shortName>
    </alternativeName>
</protein>
<gene>
    <name type="primary">manC</name>
    <name type="synonym">rfbM</name>
</gene>
<sequence>MSSPLIPVILSGGNGTRLWPLSREEYPKQFLKLTDSISMLQSTISRLDSLNTSSPVVICNELHRFIVAEQLRHLNKLDNNIILEPSGRNTAPAICIAALILKMKHPNENPLMLVLPADHSVKKVKTFCNTIKSAIPFAEAGNLVSFGIKPTHPETGYGYIQKGKVLSDSDIYEVSEVRTFVEKPNLKTAESFIEKDEYYWNSGMYLFSVERYLQELSLYRPDIVKVCQETVKNIHYDMDFIRLDDKIFRNCPQESIDYAVMEKTKDAVVATMDIGWNDVGAWSSLWELGKKDSSGNVITGDIVCHETENSYIYTESGLVATIGIQDLVIIHTKDSLLVSRRDSVQNVKNIVQHLDLSGRKEHKEHREVFKSWGRCDSIDSSEKYHYQVKRITVNPSENYRCNYIITVRNIGVVVMGIAKLTVAEEIKILKENESVYIPAGIKHSLKILDNTTCVNRSLDRFLSC</sequence>
<reference key="1">
    <citation type="journal article" date="1993" name="J. Bacteriol.">
        <title>Identification, expression, and DNA sequence of the GDP-mannose biosynthesis genes encoded by the O7 rfb gene cluster of strain VW187 (Escherichia coli O7:K1).</title>
        <authorList>
            <person name="Marolda C.L."/>
            <person name="Valvano M.A."/>
        </authorList>
    </citation>
    <scope>NUCLEOTIDE SEQUENCE [GENOMIC DNA]</scope>
    <source>
        <strain>O7:K1 / VW187</strain>
    </source>
</reference>
<evidence type="ECO:0000305" key="1"/>
<keyword id="KW-0342">GTP-binding</keyword>
<keyword id="KW-0448">Lipopolysaccharide biosynthesis</keyword>
<keyword id="KW-0547">Nucleotide-binding</keyword>
<keyword id="KW-0548">Nucleotidyltransferase</keyword>
<keyword id="KW-0808">Transferase</keyword>
<accession>P37741</accession>
<dbReference type="EC" id="2.7.7.13"/>
<dbReference type="EMBL" id="AF125322">
    <property type="protein sequence ID" value="AAC27538.1"/>
    <property type="molecule type" value="Genomic_DNA"/>
</dbReference>
<dbReference type="PIR" id="C40630">
    <property type="entry name" value="C40630"/>
</dbReference>
<dbReference type="RefSeq" id="WP_000097982.1">
    <property type="nucleotide sequence ID" value="NZ_UIJD01000062.1"/>
</dbReference>
<dbReference type="SMR" id="P37741"/>
<dbReference type="UniPathway" id="UPA00126">
    <property type="reaction ID" value="UER00930"/>
</dbReference>
<dbReference type="UniPathway" id="UPA00281"/>
<dbReference type="GO" id="GO:0005525">
    <property type="term" value="F:GTP binding"/>
    <property type="evidence" value="ECO:0007669"/>
    <property type="project" value="UniProtKB-KW"/>
</dbReference>
<dbReference type="GO" id="GO:0004475">
    <property type="term" value="F:mannose-1-phosphate guanylyltransferase (GTP) activity"/>
    <property type="evidence" value="ECO:0007669"/>
    <property type="project" value="UniProtKB-EC"/>
</dbReference>
<dbReference type="GO" id="GO:0009298">
    <property type="term" value="P:GDP-mannose biosynthetic process"/>
    <property type="evidence" value="ECO:0007669"/>
    <property type="project" value="UniProtKB-UniPathway"/>
</dbReference>
<dbReference type="GO" id="GO:0009243">
    <property type="term" value="P:O antigen biosynthetic process"/>
    <property type="evidence" value="ECO:0007669"/>
    <property type="project" value="UniProtKB-UniPathway"/>
</dbReference>
<dbReference type="CDD" id="cd02509">
    <property type="entry name" value="GDP-M1P_Guanylyltransferase"/>
    <property type="match status" value="1"/>
</dbReference>
<dbReference type="FunFam" id="3.90.550.10:FF:000046">
    <property type="entry name" value="Mannose-1-phosphate guanylyltransferase (GDP)"/>
    <property type="match status" value="1"/>
</dbReference>
<dbReference type="Gene3D" id="2.60.120.10">
    <property type="entry name" value="Jelly Rolls"/>
    <property type="match status" value="1"/>
</dbReference>
<dbReference type="Gene3D" id="3.90.550.10">
    <property type="entry name" value="Spore Coat Polysaccharide Biosynthesis Protein SpsA, Chain A"/>
    <property type="match status" value="1"/>
</dbReference>
<dbReference type="InterPro" id="IPR049577">
    <property type="entry name" value="GMPP_N"/>
</dbReference>
<dbReference type="InterPro" id="IPR006375">
    <property type="entry name" value="Man1P_GuaTrfase/Man6P_Isoase"/>
</dbReference>
<dbReference type="InterPro" id="IPR001538">
    <property type="entry name" value="Man6P_isomerase-2_C"/>
</dbReference>
<dbReference type="InterPro" id="IPR054566">
    <property type="entry name" value="ManC/GMP-like_b-helix"/>
</dbReference>
<dbReference type="InterPro" id="IPR051161">
    <property type="entry name" value="Mannose-6P_isomerase_type2"/>
</dbReference>
<dbReference type="InterPro" id="IPR005835">
    <property type="entry name" value="NTP_transferase_dom"/>
</dbReference>
<dbReference type="InterPro" id="IPR029044">
    <property type="entry name" value="Nucleotide-diphossugar_trans"/>
</dbReference>
<dbReference type="InterPro" id="IPR014710">
    <property type="entry name" value="RmlC-like_jellyroll"/>
</dbReference>
<dbReference type="InterPro" id="IPR011051">
    <property type="entry name" value="RmlC_Cupin_sf"/>
</dbReference>
<dbReference type="NCBIfam" id="TIGR01479">
    <property type="entry name" value="GMP_PMI"/>
    <property type="match status" value="1"/>
</dbReference>
<dbReference type="PANTHER" id="PTHR46390">
    <property type="entry name" value="MANNOSE-1-PHOSPHATE GUANYLYLTRANSFERASE"/>
    <property type="match status" value="1"/>
</dbReference>
<dbReference type="PANTHER" id="PTHR46390:SF1">
    <property type="entry name" value="MANNOSE-1-PHOSPHATE GUANYLYLTRANSFERASE"/>
    <property type="match status" value="1"/>
</dbReference>
<dbReference type="Pfam" id="PF22640">
    <property type="entry name" value="ManC_GMP_beta-helix"/>
    <property type="match status" value="1"/>
</dbReference>
<dbReference type="Pfam" id="PF01050">
    <property type="entry name" value="MannoseP_isomer"/>
    <property type="match status" value="1"/>
</dbReference>
<dbReference type="Pfam" id="PF00483">
    <property type="entry name" value="NTP_transferase"/>
    <property type="match status" value="1"/>
</dbReference>
<dbReference type="SUPFAM" id="SSF53448">
    <property type="entry name" value="Nucleotide-diphospho-sugar transferases"/>
    <property type="match status" value="1"/>
</dbReference>
<dbReference type="SUPFAM" id="SSF51182">
    <property type="entry name" value="RmlC-like cupins"/>
    <property type="match status" value="1"/>
</dbReference>
<comment type="function">
    <text>Involved in GDP-mannose biosynthesis which serves as the activated sugar nucleotide precursor for mannose residues in cell surface polysaccharides. This enzyme participates in synthesis of the LPS O7 antigen.</text>
</comment>
<comment type="catalytic activity">
    <reaction>
        <text>alpha-D-mannose 1-phosphate + GTP + H(+) = GDP-alpha-D-mannose + diphosphate</text>
        <dbReference type="Rhea" id="RHEA:15229"/>
        <dbReference type="ChEBI" id="CHEBI:15378"/>
        <dbReference type="ChEBI" id="CHEBI:33019"/>
        <dbReference type="ChEBI" id="CHEBI:37565"/>
        <dbReference type="ChEBI" id="CHEBI:57527"/>
        <dbReference type="ChEBI" id="CHEBI:58409"/>
        <dbReference type="EC" id="2.7.7.13"/>
    </reaction>
</comment>
<comment type="pathway">
    <text>Nucleotide-sugar biosynthesis; GDP-alpha-D-mannose biosynthesis; GDP-alpha-D-mannose from alpha-D-mannose 1-phosphate (GTP route): step 1/1.</text>
</comment>
<comment type="pathway">
    <text>Bacterial outer membrane biogenesis; LPS O-antigen biosynthesis.</text>
</comment>
<comment type="similarity">
    <text evidence="1">Belongs to the mannose-6-phosphate isomerase type 2 family.</text>
</comment>
<name>MANC7_ECOLX</name>
<proteinExistence type="inferred from homology"/>
<organism>
    <name type="scientific">Escherichia coli</name>
    <dbReference type="NCBI Taxonomy" id="562"/>
    <lineage>
        <taxon>Bacteria</taxon>
        <taxon>Pseudomonadati</taxon>
        <taxon>Pseudomonadota</taxon>
        <taxon>Gammaproteobacteria</taxon>
        <taxon>Enterobacterales</taxon>
        <taxon>Enterobacteriaceae</taxon>
        <taxon>Escherichia</taxon>
    </lineage>
</organism>